<reference key="1">
    <citation type="journal article" date="1994" name="J. Bacteriol.">
        <title>4-hydroxybenzoate-coenzyme A ligase from Rhodopseudomonas palustris: purification, gene sequence, and role in anaerobic degradation.</title>
        <authorList>
            <person name="Gibson J."/>
            <person name="Dispensa M."/>
            <person name="Fogg G.C."/>
            <person name="Evans D.T."/>
            <person name="Harwood C.S."/>
        </authorList>
    </citation>
    <scope>NUCLEOTIDE SEQUENCE [GENOMIC DNA]</scope>
    <scope>FUNCTION</scope>
    <scope>CATALYTIC ACTIVITY</scope>
    <scope>SUBSTRATE SPECIFICITY</scope>
    <scope>BIOPHYSICOCHEMICAL PROPERTIES</scope>
    <scope>BLOCKED N-TERMINUS</scope>
    <scope>SUBUNIT</scope>
    <source>
        <strain>ATCC BAA-98 / CGA009</strain>
    </source>
</reference>
<reference key="2">
    <citation type="journal article" date="2004" name="Nat. Biotechnol.">
        <title>Complete genome sequence of the metabolically versatile photosynthetic bacterium Rhodopseudomonas palustris.</title>
        <authorList>
            <person name="Larimer F.W."/>
            <person name="Chain P."/>
            <person name="Hauser L."/>
            <person name="Lamerdin J.E."/>
            <person name="Malfatti S."/>
            <person name="Do L."/>
            <person name="Land M.L."/>
            <person name="Pelletier D.A."/>
            <person name="Beatty J.T."/>
            <person name="Lang A.S."/>
            <person name="Tabita F.R."/>
            <person name="Gibson J.L."/>
            <person name="Hanson T.E."/>
            <person name="Bobst C."/>
            <person name="Torres y Torres J.L."/>
            <person name="Peres C."/>
            <person name="Harrison F.H."/>
            <person name="Gibson J."/>
            <person name="Harwood C.S."/>
        </authorList>
    </citation>
    <scope>NUCLEOTIDE SEQUENCE [LARGE SCALE GENOMIC DNA]</scope>
    <source>
        <strain>ATCC BAA-98 / CGA009</strain>
    </source>
</reference>
<name>4HBCL_RHOPA</name>
<proteinExistence type="evidence at protein level"/>
<keyword id="KW-0067">ATP-binding</keyword>
<keyword id="KW-0436">Ligase</keyword>
<keyword id="KW-0547">Nucleotide-binding</keyword>
<feature type="chain" id="PRO_5000144018" description="4-hydroxybenzoate--CoA/benzoate--CoA ligase">
    <location>
        <begin position="1"/>
        <end position="539"/>
    </location>
</feature>
<sequence>MPLRDYNAAVDFVDRNVAEGRGGKIAFIDPQRSLSYGELRDAVARVGPMLARLGVEQENRIALVLKDTVDFPILFWGAIRAGIVPVLLNTRLTADQYRYLLEDSRSRVVFASSEFLPVIEEAAADLPHLRTIIAVGDAPAPTLQLANLLATEQEGGAPAATCADDIAYWQYSSGTTGMPKGVMHVHSSPRVMAENAGRRIGYREDDVVFSAAKLFFAYGLGNAMFCPMGIGATSVLYPERPTADSVFDTLRLHQPTLLFAVPTLYAAMLADPRSRTETLPDRLRLCVSAGEPLPAQVGLNWRNRFGHDIVNGVGSTEMGHLFLTNLPHAVEYGTSGVPVDGYRLRLVGDRGQDVADDEIGELLVSGGSSAAGYWNQRDKTRTTFVGEWTRTGDKYHRRADGVYTYCGRTDDIFKVSGIWVSPFEIEQALMSHAKVLEAAVIPAEDTDGLIKPKAFIVLASRGDIDPGALFDELKEHVKSAIGPWKYPRWIQIMDDLPKTSSGKLQRYLLREMTLGGIEATESAPSEPALYGRVVAGNGR</sequence>
<comment type="function">
    <text evidence="1">Catalyzes the ligation of 4-hydroxybenzoate, benzoate or cyclohex-1,4-dienecarboxylate and CoA at the expense of ATP. The enzyme shows low activity towards cyclo-2,5-dienecarboxylate, 4-fluorobenzoate, 4-chlorobenzoate and 2-methoxybenzoate.</text>
</comment>
<comment type="catalytic activity">
    <reaction evidence="1">
        <text>4-hydroxybenzoate + ATP + CoA = 4-hydroxybenzoyl-CoA + AMP + diphosphate</text>
        <dbReference type="Rhea" id="RHEA:23116"/>
        <dbReference type="ChEBI" id="CHEBI:17879"/>
        <dbReference type="ChEBI" id="CHEBI:30616"/>
        <dbReference type="ChEBI" id="CHEBI:33019"/>
        <dbReference type="ChEBI" id="CHEBI:57287"/>
        <dbReference type="ChEBI" id="CHEBI:57356"/>
        <dbReference type="ChEBI" id="CHEBI:456215"/>
        <dbReference type="EC" id="6.2.1.27"/>
    </reaction>
</comment>
<comment type="catalytic activity">
    <reaction evidence="1">
        <text>benzoate + ATP + CoA = benzoyl-CoA + AMP + diphosphate</text>
        <dbReference type="Rhea" id="RHEA:10132"/>
        <dbReference type="ChEBI" id="CHEBI:16150"/>
        <dbReference type="ChEBI" id="CHEBI:30616"/>
        <dbReference type="ChEBI" id="CHEBI:33019"/>
        <dbReference type="ChEBI" id="CHEBI:57287"/>
        <dbReference type="ChEBI" id="CHEBI:57369"/>
        <dbReference type="ChEBI" id="CHEBI:456215"/>
        <dbReference type="EC" id="6.2.1.25"/>
    </reaction>
</comment>
<comment type="biophysicochemical properties">
    <kinetics>
        <KM evidence="1">400 uM for benzoate</KM>
        <KM evidence="1">120 uM for 4-hydroxybenzoate</KM>
        <KM evidence="1">90 uM for ATP</KM>
        <KM evidence="1">400 uM for CoA</KM>
    </kinetics>
    <phDependence>
        <text evidence="1">Optimum pH is above 9.</text>
    </phDependence>
</comment>
<comment type="subunit">
    <text evidence="1">Homodimer.</text>
</comment>
<comment type="PTM">
    <text>The N-terminus is blocked.</text>
</comment>
<comment type="similarity">
    <text evidence="2">Belongs to the ATP-dependent AMP-binding enzyme family. Benzoate-CoA ligase subfamily.</text>
</comment>
<protein>
    <recommendedName>
        <fullName>4-hydroxybenzoate--CoA/benzoate--CoA ligase</fullName>
        <ecNumber>6.2.1.25</ecNumber>
        <ecNumber>6.2.1.27</ecNumber>
    </recommendedName>
    <alternativeName>
        <fullName>4-hydroxybenzoyl-CoA synthetase</fullName>
    </alternativeName>
</protein>
<evidence type="ECO:0000269" key="1">
    <source>
    </source>
</evidence>
<evidence type="ECO:0000305" key="2"/>
<accession>Q53005</accession>
<accession>Q6NC06</accession>
<dbReference type="EC" id="6.2.1.25"/>
<dbReference type="EC" id="6.2.1.27"/>
<dbReference type="EMBL" id="U02033">
    <property type="protein sequence ID" value="AAA62604.1"/>
    <property type="molecule type" value="Genomic_DNA"/>
</dbReference>
<dbReference type="EMBL" id="BX572595">
    <property type="protein sequence ID" value="CAE26113.1"/>
    <property type="molecule type" value="Genomic_DNA"/>
</dbReference>
<dbReference type="PIR" id="A58538">
    <property type="entry name" value="A58538"/>
</dbReference>
<dbReference type="RefSeq" id="WP_011156236.1">
    <property type="nucleotide sequence ID" value="NZ_CP116810.1"/>
</dbReference>
<dbReference type="SMR" id="Q53005"/>
<dbReference type="STRING" id="258594.RPA0669"/>
<dbReference type="eggNOG" id="COG0365">
    <property type="taxonomic scope" value="Bacteria"/>
</dbReference>
<dbReference type="HOGENOM" id="CLU_000022_59_10_5"/>
<dbReference type="PhylomeDB" id="Q53005"/>
<dbReference type="BioCyc" id="MetaCyc:MONOMER-17402"/>
<dbReference type="SABIO-RK" id="Q53005"/>
<dbReference type="GO" id="GO:0018859">
    <property type="term" value="F:4-hydroxybenzoate-CoA ligase activity"/>
    <property type="evidence" value="ECO:0007669"/>
    <property type="project" value="UniProtKB-EC"/>
</dbReference>
<dbReference type="GO" id="GO:0005524">
    <property type="term" value="F:ATP binding"/>
    <property type="evidence" value="ECO:0007669"/>
    <property type="project" value="UniProtKB-KW"/>
</dbReference>
<dbReference type="GO" id="GO:0018858">
    <property type="term" value="F:benzoate-CoA ligase activity"/>
    <property type="evidence" value="ECO:0007669"/>
    <property type="project" value="UniProtKB-EC"/>
</dbReference>
<dbReference type="GO" id="GO:0044550">
    <property type="term" value="P:secondary metabolite biosynthetic process"/>
    <property type="evidence" value="ECO:0007669"/>
    <property type="project" value="TreeGrafter"/>
</dbReference>
<dbReference type="CDD" id="cd05959">
    <property type="entry name" value="BCL_4HBCL"/>
    <property type="match status" value="1"/>
</dbReference>
<dbReference type="Gene3D" id="3.30.300.30">
    <property type="match status" value="1"/>
</dbReference>
<dbReference type="Gene3D" id="3.40.50.12820">
    <property type="match status" value="1"/>
</dbReference>
<dbReference type="Gene3D" id="3.40.50.980">
    <property type="match status" value="1"/>
</dbReference>
<dbReference type="Gene3D" id="2.30.38.10">
    <property type="entry name" value="Luciferase, Domain 3"/>
    <property type="match status" value="1"/>
</dbReference>
<dbReference type="InterPro" id="IPR025110">
    <property type="entry name" value="AMP-bd_C"/>
</dbReference>
<dbReference type="InterPro" id="IPR045851">
    <property type="entry name" value="AMP-bd_C_sf"/>
</dbReference>
<dbReference type="InterPro" id="IPR000873">
    <property type="entry name" value="AMP-dep_synth/lig_dom"/>
</dbReference>
<dbReference type="InterPro" id="IPR011957">
    <property type="entry name" value="Benz_CoA_lig"/>
</dbReference>
<dbReference type="NCBIfam" id="TIGR02262">
    <property type="entry name" value="benz_CoA_lig"/>
    <property type="match status" value="1"/>
</dbReference>
<dbReference type="PANTHER" id="PTHR43352">
    <property type="entry name" value="ACETYL-COA SYNTHETASE"/>
    <property type="match status" value="1"/>
</dbReference>
<dbReference type="PANTHER" id="PTHR43352:SF1">
    <property type="entry name" value="ANTHRANILATE--COA LIGASE"/>
    <property type="match status" value="1"/>
</dbReference>
<dbReference type="Pfam" id="PF00501">
    <property type="entry name" value="AMP-binding"/>
    <property type="match status" value="1"/>
</dbReference>
<dbReference type="Pfam" id="PF13193">
    <property type="entry name" value="AMP-binding_C"/>
    <property type="match status" value="1"/>
</dbReference>
<dbReference type="SUPFAM" id="SSF56801">
    <property type="entry name" value="Acetyl-CoA synthetase-like"/>
    <property type="match status" value="1"/>
</dbReference>
<gene>
    <name type="primary">hbaA</name>
    <name type="ordered locus">RPA0669</name>
</gene>
<organism>
    <name type="scientific">Rhodopseudomonas palustris (strain ATCC BAA-98 / CGA009)</name>
    <dbReference type="NCBI Taxonomy" id="258594"/>
    <lineage>
        <taxon>Bacteria</taxon>
        <taxon>Pseudomonadati</taxon>
        <taxon>Pseudomonadota</taxon>
        <taxon>Alphaproteobacteria</taxon>
        <taxon>Hyphomicrobiales</taxon>
        <taxon>Nitrobacteraceae</taxon>
        <taxon>Rhodopseudomonas</taxon>
    </lineage>
</organism>